<evidence type="ECO:0000250" key="1">
    <source>
        <dbReference type="UniProtKB" id="P04968"/>
    </source>
</evidence>
<evidence type="ECO:0000269" key="2">
    <source>
    </source>
</evidence>
<evidence type="ECO:0000303" key="3">
    <source>
    </source>
</evidence>
<evidence type="ECO:0000305" key="4">
    <source>
    </source>
</evidence>
<evidence type="ECO:0000312" key="5">
    <source>
        <dbReference type="EMBL" id="ABL71986.1"/>
    </source>
</evidence>
<organism>
    <name type="scientific">Paracoccus denitrificans (strain Pd 1222)</name>
    <dbReference type="NCBI Taxonomy" id="318586"/>
    <lineage>
        <taxon>Bacteria</taxon>
        <taxon>Pseudomonadati</taxon>
        <taxon>Pseudomonadota</taxon>
        <taxon>Alphaproteobacteria</taxon>
        <taxon>Rhodobacterales</taxon>
        <taxon>Paracoccaceae</taxon>
        <taxon>Paracoccus</taxon>
    </lineage>
</organism>
<proteinExistence type="evidence at protein level"/>
<comment type="function">
    <text evidence="2">Catalyzes the dehydration of (2R,3S)-beta-hydroxyaspartate ((3S)-3-hydroxy-D-aspartate) into iminosuccinate. Is essential for the growth of P.denitrificans in the presence of glycolate and glyoxylate since it functions in glyoxylate assimilation via the beta-hydroxyaspartate cycle (BHAC).</text>
</comment>
<comment type="catalytic activity">
    <reaction evidence="2">
        <text>(3S)-3-hydroxy-D-aspartate = iminosuccinate + H2O</text>
        <dbReference type="Rhea" id="RHEA:62112"/>
        <dbReference type="ChEBI" id="CHEBI:15377"/>
        <dbReference type="ChEBI" id="CHEBI:60894"/>
        <dbReference type="ChEBI" id="CHEBI:77875"/>
    </reaction>
    <physiologicalReaction direction="left-to-right" evidence="2">
        <dbReference type="Rhea" id="RHEA:62113"/>
    </physiologicalReaction>
</comment>
<comment type="cofactor">
    <cofactor evidence="4">
        <name>pyridoxal 5'-phosphate</name>
        <dbReference type="ChEBI" id="CHEBI:597326"/>
    </cofactor>
</comment>
<comment type="biophysicochemical properties">
    <kinetics>
        <KM evidence="2">0.2 mM for (3S)-3-hydroxy-D-aspartate</KM>
        <text evidence="2">kcat is 35 sec(-1).</text>
    </kinetics>
</comment>
<comment type="induction">
    <text evidence="2">Induced by glycolate.</text>
</comment>
<comment type="disruption phenotype">
    <text evidence="2">Abolishes growth on glycolate or glyoxylate, but the deletion mutant strain is still able to grow on acetate, succinate or glucose with comparable growth rates as for the wild type.</text>
</comment>
<comment type="miscellaneous">
    <text evidence="2">Iminosuccinate is a labile compound that spontaneously decays into free ammonia and oxaloacetate in solution.</text>
</comment>
<comment type="miscellaneous">
    <text evidence="4">The beta-hydroxyaspartate cycle (BHAC) consists of BhcA, BhcB, BhcC, and BhcD enzyme activities. Overall, it converts two molecules of glyoxylate (C2) into oxaloacetate (C4) without the loss of carbon as CO2, under consumption of just one reducing equivalent and regeneration of the catalytic amino donor, which makes it one of the most efficient glyoxylate assimilation pathways. This cycle is of ecological importance in the assimilation of phytoplankton-derived dissolved organic carbon in marine environments by marine Proteobacteria, and suggests a trophic interaction between autotrophic phytoplankton and heterotrophic bacterioplankton. Oxaloacetate formed in the BHAC can directly enter the tricarboxylic acid cycle or serve as substrate for anabolic reactions.</text>
</comment>
<sequence>MYIPTYEDMLAAHERIKPHIRRTPIRTSDYLNELTGAQLFFKCENFQEPGAFKVRGATNAVFGLDDAQAAKGVATHSSGNHASCLSYAAMLRGIPCNVVMPRTAPQAKKDTVRRYGGVITECEPSTSSREETFAKVQAETGGDFVHPYNDPRVIAGQGTCAKELVEQVDGLDAVVAPIGGGGMISGTCLTLSTLAPETRVIAAEPEQADDAYRSFKAGYIIADDAPKTVADGLLVPLKDLTWHFVKNHVSEIYTASDAEIVDAMKLIWKHLRIVMEPSSAVPLATILKNPEAFAGKRVGVIVTGGNVDLDKLPWN</sequence>
<dbReference type="EC" id="4.2.1.-" evidence="2"/>
<dbReference type="EMBL" id="CP000490">
    <property type="protein sequence ID" value="ABL71986.1"/>
    <property type="molecule type" value="Genomic_DNA"/>
</dbReference>
<dbReference type="SMR" id="A1B8Z2"/>
<dbReference type="STRING" id="318586.Pden_3920"/>
<dbReference type="EnsemblBacteria" id="ABL71986">
    <property type="protein sequence ID" value="ABL71986"/>
    <property type="gene ID" value="Pden_3920"/>
</dbReference>
<dbReference type="KEGG" id="pde:Pden_3920"/>
<dbReference type="eggNOG" id="COG1171">
    <property type="taxonomic scope" value="Bacteria"/>
</dbReference>
<dbReference type="HOGENOM" id="CLU_021152_4_2_5"/>
<dbReference type="Proteomes" id="UP000000361">
    <property type="component" value="Chromosome 2"/>
</dbReference>
<dbReference type="GO" id="GO:0005524">
    <property type="term" value="F:ATP binding"/>
    <property type="evidence" value="ECO:0007669"/>
    <property type="project" value="TreeGrafter"/>
</dbReference>
<dbReference type="GO" id="GO:0016836">
    <property type="term" value="F:hydro-lyase activity"/>
    <property type="evidence" value="ECO:0000314"/>
    <property type="project" value="UniProtKB"/>
</dbReference>
<dbReference type="GO" id="GO:0003941">
    <property type="term" value="F:L-serine ammonia-lyase activity"/>
    <property type="evidence" value="ECO:0007669"/>
    <property type="project" value="TreeGrafter"/>
</dbReference>
<dbReference type="GO" id="GO:0000287">
    <property type="term" value="F:magnesium ion binding"/>
    <property type="evidence" value="ECO:0007669"/>
    <property type="project" value="TreeGrafter"/>
</dbReference>
<dbReference type="GO" id="GO:0030170">
    <property type="term" value="F:pyridoxal phosphate binding"/>
    <property type="evidence" value="ECO:0007669"/>
    <property type="project" value="TreeGrafter"/>
</dbReference>
<dbReference type="GO" id="GO:0030378">
    <property type="term" value="F:serine racemase activity"/>
    <property type="evidence" value="ECO:0007669"/>
    <property type="project" value="TreeGrafter"/>
</dbReference>
<dbReference type="GO" id="GO:0018114">
    <property type="term" value="F:threonine racemase activity"/>
    <property type="evidence" value="ECO:0007669"/>
    <property type="project" value="TreeGrafter"/>
</dbReference>
<dbReference type="GO" id="GO:0070179">
    <property type="term" value="P:D-serine biosynthetic process"/>
    <property type="evidence" value="ECO:0007669"/>
    <property type="project" value="TreeGrafter"/>
</dbReference>
<dbReference type="GO" id="GO:0046296">
    <property type="term" value="P:glycolate catabolic process"/>
    <property type="evidence" value="ECO:0000315"/>
    <property type="project" value="UniProtKB"/>
</dbReference>
<dbReference type="GO" id="GO:0009436">
    <property type="term" value="P:glyoxylate catabolic process"/>
    <property type="evidence" value="ECO:0000315"/>
    <property type="project" value="UniProtKB"/>
</dbReference>
<dbReference type="CDD" id="cd01562">
    <property type="entry name" value="Thr-dehyd"/>
    <property type="match status" value="1"/>
</dbReference>
<dbReference type="FunFam" id="3.40.50.1100:FF:000041">
    <property type="entry name" value="Threonine ammonia-lyase, variant"/>
    <property type="match status" value="1"/>
</dbReference>
<dbReference type="Gene3D" id="3.40.50.1100">
    <property type="match status" value="2"/>
</dbReference>
<dbReference type="InterPro" id="IPR054856">
    <property type="entry name" value="BHydaspDhtse"/>
</dbReference>
<dbReference type="InterPro" id="IPR001926">
    <property type="entry name" value="TrpB-like_PALP"/>
</dbReference>
<dbReference type="InterPro" id="IPR036052">
    <property type="entry name" value="TrpB-like_PALP_sf"/>
</dbReference>
<dbReference type="NCBIfam" id="NF045641">
    <property type="entry name" value="BHydaspDhtseBhcB"/>
    <property type="match status" value="1"/>
</dbReference>
<dbReference type="PANTHER" id="PTHR43050">
    <property type="entry name" value="SERINE / THREONINE RACEMASE FAMILY MEMBER"/>
    <property type="match status" value="1"/>
</dbReference>
<dbReference type="PANTHER" id="PTHR43050:SF1">
    <property type="entry name" value="SERINE RACEMASE"/>
    <property type="match status" value="1"/>
</dbReference>
<dbReference type="Pfam" id="PF00291">
    <property type="entry name" value="PALP"/>
    <property type="match status" value="1"/>
</dbReference>
<dbReference type="SUPFAM" id="SSF53686">
    <property type="entry name" value="Tryptophan synthase beta subunit-like PLP-dependent enzymes"/>
    <property type="match status" value="1"/>
</dbReference>
<reference key="1">
    <citation type="submission" date="2006-12" db="EMBL/GenBank/DDBJ databases">
        <title>Complete sequence of chromosome 2 of Paracoccus denitrificans PD1222.</title>
        <authorList>
            <person name="Copeland A."/>
            <person name="Lucas S."/>
            <person name="Lapidus A."/>
            <person name="Barry K."/>
            <person name="Detter J.C."/>
            <person name="Glavina del Rio T."/>
            <person name="Hammon N."/>
            <person name="Israni S."/>
            <person name="Dalin E."/>
            <person name="Tice H."/>
            <person name="Pitluck S."/>
            <person name="Munk A.C."/>
            <person name="Brettin T."/>
            <person name="Bruce D."/>
            <person name="Han C."/>
            <person name="Tapia R."/>
            <person name="Gilna P."/>
            <person name="Schmutz J."/>
            <person name="Larimer F."/>
            <person name="Land M."/>
            <person name="Hauser L."/>
            <person name="Kyrpides N."/>
            <person name="Lykidis A."/>
            <person name="Spiro S."/>
            <person name="Richardson D.J."/>
            <person name="Moir J.W.B."/>
            <person name="Ferguson S.J."/>
            <person name="van Spanning R.J.M."/>
            <person name="Richardson P."/>
        </authorList>
    </citation>
    <scope>NUCLEOTIDE SEQUENCE [LARGE SCALE GENOMIC DNA]</scope>
    <source>
        <strain>Pd 1222</strain>
    </source>
</reference>
<reference key="2">
    <citation type="journal article" date="2019" name="Nature">
        <title>Marine Proteobacteria metabolize glycolate via the beta-hydroxyaspartate cycle.</title>
        <authorList>
            <person name="Schada von Borzyskowski L."/>
            <person name="Severi F."/>
            <person name="Krueger K."/>
            <person name="Hermann L."/>
            <person name="Gilardet A."/>
            <person name="Sippel F."/>
            <person name="Pommerenke B."/>
            <person name="Claus P."/>
            <person name="Cortina N.S."/>
            <person name="Glatter T."/>
            <person name="Zauner S."/>
            <person name="Zarzycki J."/>
            <person name="Fuchs B.M."/>
            <person name="Bremer E."/>
            <person name="Maier U.G."/>
            <person name="Amann R.I."/>
            <person name="Erb T.J."/>
        </authorList>
    </citation>
    <scope>FUNCTION</scope>
    <scope>CATALYTIC ACTIVITY</scope>
    <scope>BIOPHYSICOCHEMICAL PROPERTIES</scope>
    <scope>DISRUPTION PHENOTYPE</scope>
    <scope>INDUCTION</scope>
    <source>
        <strain>ATCC 17741 / DSM 413 / NBRC 16712 / NCCB 22021 / NCIMB 11627</strain>
    </source>
</reference>
<feature type="chain" id="PRO_0000449103" description="beta-hydroxyaspartate dehydratase">
    <location>
        <begin position="1"/>
        <end position="315"/>
    </location>
</feature>
<feature type="binding site" evidence="1">
    <location>
        <position position="80"/>
    </location>
    <ligand>
        <name>pyridoxal 5'-phosphate</name>
        <dbReference type="ChEBI" id="CHEBI:597326"/>
    </ligand>
</feature>
<feature type="binding site" evidence="1">
    <location>
        <begin position="179"/>
        <end position="183"/>
    </location>
    <ligand>
        <name>pyridoxal 5'-phosphate</name>
        <dbReference type="ChEBI" id="CHEBI:597326"/>
    </ligand>
</feature>
<feature type="binding site" evidence="1">
    <location>
        <position position="303"/>
    </location>
    <ligand>
        <name>pyridoxal 5'-phosphate</name>
        <dbReference type="ChEBI" id="CHEBI:597326"/>
    </ligand>
</feature>
<feature type="modified residue" description="N6-(pyridoxal phosphate)lysine" evidence="1">
    <location>
        <position position="53"/>
    </location>
</feature>
<keyword id="KW-0456">Lyase</keyword>
<keyword id="KW-0663">Pyridoxal phosphate</keyword>
<keyword id="KW-1185">Reference proteome</keyword>
<name>BHCB_PARDP</name>
<protein>
    <recommendedName>
        <fullName evidence="3">beta-hydroxyaspartate dehydratase</fullName>
        <ecNumber evidence="2">4.2.1.-</ecNumber>
    </recommendedName>
</protein>
<gene>
    <name evidence="3" type="primary">bhcB</name>
    <name evidence="5" type="ordered locus">Pden_3920</name>
</gene>
<accession>A1B8Z2</accession>